<accession>B0W2S0</accession>
<proteinExistence type="inferred from homology"/>
<protein>
    <recommendedName>
        <fullName evidence="1">Clustered mitochondria protein homolog</fullName>
    </recommendedName>
</protein>
<evidence type="ECO:0000255" key="1">
    <source>
        <dbReference type="HAMAP-Rule" id="MF_03013"/>
    </source>
</evidence>
<evidence type="ECO:0000255" key="2">
    <source>
        <dbReference type="PROSITE-ProRule" id="PRU01167"/>
    </source>
</evidence>
<evidence type="ECO:0000256" key="3">
    <source>
        <dbReference type="SAM" id="MobiDB-lite"/>
    </source>
</evidence>
<keyword id="KW-0963">Cytoplasm</keyword>
<keyword id="KW-1185">Reference proteome</keyword>
<keyword id="KW-0677">Repeat</keyword>
<keyword id="KW-0802">TPR repeat</keyword>
<organism>
    <name type="scientific">Culex quinquefasciatus</name>
    <name type="common">Southern house mosquito</name>
    <name type="synonym">Culex pungens</name>
    <dbReference type="NCBI Taxonomy" id="7176"/>
    <lineage>
        <taxon>Eukaryota</taxon>
        <taxon>Metazoa</taxon>
        <taxon>Ecdysozoa</taxon>
        <taxon>Arthropoda</taxon>
        <taxon>Hexapoda</taxon>
        <taxon>Insecta</taxon>
        <taxon>Pterygota</taxon>
        <taxon>Neoptera</taxon>
        <taxon>Endopterygota</taxon>
        <taxon>Diptera</taxon>
        <taxon>Nematocera</taxon>
        <taxon>Culicoidea</taxon>
        <taxon>Culicidae</taxon>
        <taxon>Culicinae</taxon>
        <taxon>Culicini</taxon>
        <taxon>Culex</taxon>
        <taxon>Culex</taxon>
    </lineage>
</organism>
<dbReference type="EMBL" id="DS231828">
    <property type="protein sequence ID" value="EDS29823.1"/>
    <property type="molecule type" value="Genomic_DNA"/>
</dbReference>
<dbReference type="RefSeq" id="XP_001843004.1">
    <property type="nucleotide sequence ID" value="XM_001842952.1"/>
</dbReference>
<dbReference type="SMR" id="B0W2S0"/>
<dbReference type="FunCoup" id="B0W2S0">
    <property type="interactions" value="1694"/>
</dbReference>
<dbReference type="EnsemblMetazoa" id="CPIJ001445-RA">
    <property type="protein sequence ID" value="CPIJ001445-PA"/>
    <property type="gene ID" value="CPIJ001445"/>
</dbReference>
<dbReference type="KEGG" id="cqu:CpipJ_CPIJ001445"/>
<dbReference type="VEuPathDB" id="VectorBase:CPIJ001445"/>
<dbReference type="VEuPathDB" id="VectorBase:CQUJHB016298"/>
<dbReference type="eggNOG" id="KOG1839">
    <property type="taxonomic scope" value="Eukaryota"/>
</dbReference>
<dbReference type="HOGENOM" id="CLU_003256_1_0_1"/>
<dbReference type="InParanoid" id="B0W2S0"/>
<dbReference type="OMA" id="HPVWDKD"/>
<dbReference type="OrthoDB" id="1414216at2759"/>
<dbReference type="PhylomeDB" id="B0W2S0"/>
<dbReference type="Proteomes" id="UP000002320">
    <property type="component" value="Unassembled WGS sequence"/>
</dbReference>
<dbReference type="GO" id="GO:0005737">
    <property type="term" value="C:cytoplasm"/>
    <property type="evidence" value="ECO:0007669"/>
    <property type="project" value="UniProtKB-SubCell"/>
</dbReference>
<dbReference type="GO" id="GO:0003729">
    <property type="term" value="F:mRNA binding"/>
    <property type="evidence" value="ECO:0007669"/>
    <property type="project" value="TreeGrafter"/>
</dbReference>
<dbReference type="GO" id="GO:0048312">
    <property type="term" value="P:intracellular distribution of mitochondria"/>
    <property type="evidence" value="ECO:0007669"/>
    <property type="project" value="TreeGrafter"/>
</dbReference>
<dbReference type="GO" id="GO:0007005">
    <property type="term" value="P:mitochondrion organization"/>
    <property type="evidence" value="ECO:0007669"/>
    <property type="project" value="UniProtKB-UniRule"/>
</dbReference>
<dbReference type="CDD" id="cd15466">
    <property type="entry name" value="CLU-central"/>
    <property type="match status" value="1"/>
</dbReference>
<dbReference type="FunFam" id="3.30.2280.10:FF:000001">
    <property type="entry name" value="Clustered mitochondria (CluA/CLU1) homolog"/>
    <property type="match status" value="1"/>
</dbReference>
<dbReference type="FunFam" id="1.25.40.10:FF:000099">
    <property type="entry name" value="Clustered mitochondria protein homolog"/>
    <property type="match status" value="1"/>
</dbReference>
<dbReference type="Gene3D" id="3.30.2280.10">
    <property type="entry name" value="Hypothetical protein (hspc210)"/>
    <property type="match status" value="1"/>
</dbReference>
<dbReference type="Gene3D" id="1.25.40.10">
    <property type="entry name" value="Tetratricopeptide repeat domain"/>
    <property type="match status" value="1"/>
</dbReference>
<dbReference type="HAMAP" id="MF_03013">
    <property type="entry name" value="CLU"/>
    <property type="match status" value="1"/>
</dbReference>
<dbReference type="InterPro" id="IPR033646">
    <property type="entry name" value="CLU-central"/>
</dbReference>
<dbReference type="InterPro" id="IPR025697">
    <property type="entry name" value="CLU_dom"/>
</dbReference>
<dbReference type="InterPro" id="IPR028275">
    <property type="entry name" value="CLU_N"/>
</dbReference>
<dbReference type="InterPro" id="IPR027523">
    <property type="entry name" value="CLU_prot"/>
</dbReference>
<dbReference type="InterPro" id="IPR007967">
    <property type="entry name" value="GSKIP_dom"/>
</dbReference>
<dbReference type="InterPro" id="IPR023231">
    <property type="entry name" value="GSKIP_dom_sf"/>
</dbReference>
<dbReference type="InterPro" id="IPR011990">
    <property type="entry name" value="TPR-like_helical_dom_sf"/>
</dbReference>
<dbReference type="PANTHER" id="PTHR12601:SF6">
    <property type="entry name" value="CLUSTERED MITOCHONDRIA PROTEIN HOMOLOG"/>
    <property type="match status" value="1"/>
</dbReference>
<dbReference type="PANTHER" id="PTHR12601">
    <property type="entry name" value="EUKARYOTIC TRANSLATION INITIATION FACTOR 3 SUBUNIT EIF-3"/>
    <property type="match status" value="1"/>
</dbReference>
<dbReference type="Pfam" id="PF13236">
    <property type="entry name" value="CLU"/>
    <property type="match status" value="1"/>
</dbReference>
<dbReference type="Pfam" id="PF15044">
    <property type="entry name" value="CLU_N"/>
    <property type="match status" value="1"/>
</dbReference>
<dbReference type="Pfam" id="PF12807">
    <property type="entry name" value="eIF3_p135"/>
    <property type="match status" value="1"/>
</dbReference>
<dbReference type="Pfam" id="PF05303">
    <property type="entry name" value="GSKIP_dom"/>
    <property type="match status" value="1"/>
</dbReference>
<dbReference type="Pfam" id="PF13374">
    <property type="entry name" value="TPR_10"/>
    <property type="match status" value="1"/>
</dbReference>
<dbReference type="Pfam" id="PF13424">
    <property type="entry name" value="TPR_12"/>
    <property type="match status" value="1"/>
</dbReference>
<dbReference type="SUPFAM" id="SSF103107">
    <property type="entry name" value="Hypothetical protein c14orf129, hspc210"/>
    <property type="match status" value="1"/>
</dbReference>
<dbReference type="SUPFAM" id="SSF48452">
    <property type="entry name" value="TPR-like"/>
    <property type="match status" value="2"/>
</dbReference>
<dbReference type="PROSITE" id="PS51823">
    <property type="entry name" value="CLU"/>
    <property type="match status" value="1"/>
</dbReference>
<reference key="1">
    <citation type="submission" date="2007-03" db="EMBL/GenBank/DDBJ databases">
        <title>Annotation of Culex pipiens quinquefasciatus.</title>
        <authorList>
            <consortium name="The Broad Institute Genome Sequencing Platform"/>
            <person name="Atkinson P.W."/>
            <person name="Hemingway J."/>
            <person name="Christensen B.M."/>
            <person name="Higgs S."/>
            <person name="Kodira C.D."/>
            <person name="Hannick L.I."/>
            <person name="Megy K."/>
            <person name="O'Leary S.B."/>
            <person name="Pearson M."/>
            <person name="Haas B.J."/>
            <person name="Mauceli E."/>
            <person name="Wortman J.R."/>
            <person name="Lee N.H."/>
            <person name="Guigo R."/>
            <person name="Stanke M."/>
            <person name="Alvarado L."/>
            <person name="Amedeo P."/>
            <person name="Antoine C.H."/>
            <person name="Arensburger P."/>
            <person name="Bidwell S.L."/>
            <person name="Crawford M."/>
            <person name="Camaro F."/>
            <person name="Devon K."/>
            <person name="Engels R."/>
            <person name="Hammond M."/>
            <person name="Howarth C."/>
            <person name="Koehrsen M."/>
            <person name="Lawson D."/>
            <person name="Montgomery P."/>
            <person name="Nene V."/>
            <person name="Nusbaum C."/>
            <person name="Puiu D."/>
            <person name="Romero-Severson J."/>
            <person name="Severson D.W."/>
            <person name="Shumway M."/>
            <person name="Sisk P."/>
            <person name="Stolte C."/>
            <person name="Zeng Q."/>
            <person name="Eisenstadt E."/>
            <person name="Fraser-Liggett C.M."/>
            <person name="Strausberg R."/>
            <person name="Galagan J."/>
            <person name="Birren B."/>
            <person name="Collins F.H."/>
        </authorList>
    </citation>
    <scope>NUCLEOTIDE SEQUENCE [LARGE SCALE GENOMIC DNA]</scope>
    <source>
        <strain>JHB</strain>
    </source>
</reference>
<name>CLU_CULQU</name>
<feature type="chain" id="PRO_0000366378" description="Clustered mitochondria protein homolog">
    <location>
        <begin position="1"/>
        <end position="1377"/>
    </location>
</feature>
<feature type="domain" description="Clu" evidence="2">
    <location>
        <begin position="353"/>
        <end position="595"/>
    </location>
</feature>
<feature type="repeat" description="TPR 1">
    <location>
        <begin position="519"/>
        <end position="552"/>
    </location>
</feature>
<feature type="repeat" description="TPR 2">
    <location>
        <begin position="1022"/>
        <end position="1055"/>
    </location>
</feature>
<feature type="repeat" description="TPR 3">
    <location>
        <begin position="1148"/>
        <end position="1181"/>
    </location>
</feature>
<feature type="repeat" description="TPR 4">
    <location>
        <begin position="1183"/>
        <end position="1216"/>
    </location>
</feature>
<feature type="region of interest" description="Disordered" evidence="3">
    <location>
        <begin position="1"/>
        <end position="61"/>
    </location>
</feature>
<feature type="region of interest" description="Disordered" evidence="3">
    <location>
        <begin position="651"/>
        <end position="700"/>
    </location>
</feature>
<feature type="region of interest" description="Disordered" evidence="3">
    <location>
        <begin position="886"/>
        <end position="917"/>
    </location>
</feature>
<feature type="region of interest" description="Disordered" evidence="3">
    <location>
        <begin position="1310"/>
        <end position="1377"/>
    </location>
</feature>
<feature type="compositionally biased region" description="Basic and acidic residues" evidence="3">
    <location>
        <begin position="655"/>
        <end position="690"/>
    </location>
</feature>
<feature type="compositionally biased region" description="Polar residues" evidence="3">
    <location>
        <begin position="886"/>
        <end position="896"/>
    </location>
</feature>
<feature type="compositionally biased region" description="Low complexity" evidence="3">
    <location>
        <begin position="1364"/>
        <end position="1377"/>
    </location>
</feature>
<gene>
    <name type="ORF">CPIJ001445</name>
</gene>
<comment type="function">
    <text evidence="1">mRNA-binding protein involved in proper cytoplasmic distribution of mitochondria.</text>
</comment>
<comment type="subcellular location">
    <subcellularLocation>
        <location evidence="1">Cytoplasm</location>
    </subcellularLocation>
</comment>
<comment type="similarity">
    <text evidence="1">Belongs to the CLU family.</text>
</comment>
<sequence>MLKSIQRNGKKQKNGSKDKEPTPPKEQPLVNGNHDMNGHASDSVAPTEQQNGETKKKSDSEVMEIIQDAGFTVQIMSPGVEPLSIQVSSMELVQEIHQLLMDREDTCHRTCFSLQLDGVTLDNFAELKNVEGLKEGSVIKVVEEPYTMREARIHVRHVRDLLKSMDPADAYNGVDCSSLTFLHTITAGDILEKKKGRSDSVDCTPPEYIMPGAKERPLLPLQPGVGKKGPQPLKVLTTSAWNPPPGPRKLHGDLMYLYVVTMEDKRFHISACPRGFYINQSTDDTFEPRPDNPSYLCHSLIDLLSQISPTFRRCFAQMQKKRTQRHPFERVATPYQVYTWSAPTLDHTIDAIRAEDTFSSKLGYEEHIPGQTRDWNEELQTTRELPRETLPERLLRERAIFKVHSDFVTAATRGAMAVIDGNVMAINPGEDAKMQMFIWNNIFFSLGFDVRDHYKELGGDAAAFVAPRNDLHGVRVYSAVDVEGLYTLGTVVIDYRGYRVTAQSIIPGILEREQEQSVVYGSIDFGKTVLSHEKYLELLNNAGKHLKIYPHSVLNDDEEEIELCSSVECKGIIGNDGRHYILDLLRTFPPDVNFLKLDEELSKDCKAFGFPIEHKHKLSCLRQELLEAFIESRYLLFIKHAAFQLQQLNTNKRQQKQDTPKEETKAIEPAAKEDSANNNKEEPAAKKGEPKAATGGVPKVETEEAKKLMESLLSSDEKNESREVVKRACEAVGSLKDYEFDIRFNPDVYSPGIQHVDNPNAANSIKKQKQLVKDAAEFLVKHQIPSFVHDCLDHTAAPMDGSTLTETLHSRGINVRYLGKVANLLAKIKQLEYLHTIAVSELIIRAAKHIFVTYMQNTEMMSMAAAISHFLNCFLTTATSVSSESDVLTKSGSSGKQQRKQNKRTAAGGGKGGKSSFQCTQDNNEWQLLTSKSLWAQIQQELKSYWDYDLLPAGTVDSADPVVTHNHLQKISLLRAFCLKTGVQILLREYNFETKNKPTFNENDIVNVFPVVKHINPRASDAYNFYTTGQTKIQQGYFKDGYDLISEALNLLNNVYGAMHPENAQCLRMLARLSYIMGDPQEALAIQQRAVLMSERVNGIDHPYTIAEYAPLALYCFANSQISTALKLLYRARYLATIVCGDNHPDIALLDSNISLILHAVGEYELSLRFLEHALALNIKYYGEKSLKVAVSYHLVARTQSCMGDFRSALNNEKETYAIYKQQLGEAHEKTQESSECLRHLTQQAVVLQKKMNDIYSNGKLTTGLPPIHIQPPSMGSVLDMLNAINGIIFVQISSKEIANLKNEIEKRQKEGGAAGESSVAQANQEEVDRLLTETMAKTAAGIPFEEQDNYELPLPAATTGDEASSSSKANPVASSS</sequence>